<dbReference type="EMBL" id="AK025863">
    <property type="protein sequence ID" value="BAB15262.1"/>
    <property type="molecule type" value="mRNA"/>
</dbReference>
<dbReference type="EMBL" id="CR457351">
    <property type="protein sequence ID" value="CAG33632.1"/>
    <property type="molecule type" value="mRNA"/>
</dbReference>
<dbReference type="EMBL" id="AL136575">
    <property type="protein sequence ID" value="CAB66510.2"/>
    <property type="molecule type" value="mRNA"/>
</dbReference>
<dbReference type="EMBL" id="AC021573">
    <property type="status" value="NOT_ANNOTATED_CDS"/>
    <property type="molecule type" value="Genomic_DNA"/>
</dbReference>
<dbReference type="EMBL" id="AC090470">
    <property type="status" value="NOT_ANNOTATED_CDS"/>
    <property type="molecule type" value="Genomic_DNA"/>
</dbReference>
<dbReference type="EMBL" id="AC090589">
    <property type="status" value="NOT_ANNOTATED_CDS"/>
    <property type="molecule type" value="Genomic_DNA"/>
</dbReference>
<dbReference type="EMBL" id="AC103792">
    <property type="status" value="NOT_ANNOTATED_CDS"/>
    <property type="molecule type" value="Genomic_DNA"/>
</dbReference>
<dbReference type="EMBL" id="CH471064">
    <property type="protein sequence ID" value="EAW67970.1"/>
    <property type="molecule type" value="Genomic_DNA"/>
</dbReference>
<dbReference type="EMBL" id="CH471064">
    <property type="protein sequence ID" value="EAW67972.1"/>
    <property type="molecule type" value="Genomic_DNA"/>
</dbReference>
<dbReference type="EMBL" id="BC001860">
    <property type="protein sequence ID" value="AAH01860.1"/>
    <property type="molecule type" value="mRNA"/>
</dbReference>
<dbReference type="EMBL" id="BC009455">
    <property type="protein sequence ID" value="AAH09455.1"/>
    <property type="molecule type" value="mRNA"/>
</dbReference>
<dbReference type="EMBL" id="BC013988">
    <property type="protein sequence ID" value="AAH13988.1"/>
    <property type="molecule type" value="mRNA"/>
</dbReference>
<dbReference type="EMBL" id="BC052291">
    <property type="protein sequence ID" value="AAH52291.1"/>
    <property type="molecule type" value="mRNA"/>
</dbReference>
<dbReference type="EMBL" id="BU728094">
    <property type="status" value="NOT_ANNOTATED_CDS"/>
    <property type="molecule type" value="mRNA"/>
</dbReference>
<dbReference type="CCDS" id="CCDS31479.1">
    <molecule id="Q9H6J7-4"/>
</dbReference>
<dbReference type="CCDS" id="CCDS31480.1">
    <molecule id="Q9H6J7-2"/>
</dbReference>
<dbReference type="CCDS" id="CCDS41641.1">
    <molecule id="Q9H6J7-3"/>
</dbReference>
<dbReference type="CCDS" id="CCDS7925.1">
    <molecule id="Q9H6J7-1"/>
</dbReference>
<dbReference type="RefSeq" id="NP_001003676.1">
    <molecule id="Q9H6J7-3"/>
    <property type="nucleotide sequence ID" value="NM_001003676.3"/>
</dbReference>
<dbReference type="RefSeq" id="NP_001003677.1">
    <molecule id="Q9H6J7-2"/>
    <property type="nucleotide sequence ID" value="NM_001003677.3"/>
</dbReference>
<dbReference type="RefSeq" id="NP_001003678.1">
    <molecule id="Q9H6J7-4"/>
    <property type="nucleotide sequence ID" value="NM_001003678.3"/>
</dbReference>
<dbReference type="RefSeq" id="NP_077018.1">
    <molecule id="Q9H6J7-1"/>
    <property type="nucleotide sequence ID" value="NM_024113.5"/>
</dbReference>
<dbReference type="BioGRID" id="122543">
    <property type="interactions" value="87"/>
</dbReference>
<dbReference type="FunCoup" id="Q9H6J7">
    <property type="interactions" value="458"/>
</dbReference>
<dbReference type="IntAct" id="Q9H6J7">
    <property type="interactions" value="46"/>
</dbReference>
<dbReference type="MINT" id="Q9H6J7"/>
<dbReference type="STRING" id="9606.ENSP00000367878"/>
<dbReference type="GlyGen" id="Q9H6J7">
    <property type="glycosylation" value="1 site"/>
</dbReference>
<dbReference type="iPTMnet" id="Q9H6J7"/>
<dbReference type="PhosphoSitePlus" id="Q9H6J7"/>
<dbReference type="BioMuta" id="C11orf49"/>
<dbReference type="DMDM" id="134035405"/>
<dbReference type="jPOST" id="Q9H6J7"/>
<dbReference type="MassIVE" id="Q9H6J7"/>
<dbReference type="PaxDb" id="9606-ENSP00000367878"/>
<dbReference type="PeptideAtlas" id="Q9H6J7"/>
<dbReference type="ProteomicsDB" id="19101"/>
<dbReference type="ProteomicsDB" id="80990">
    <molecule id="Q9H6J7-1"/>
</dbReference>
<dbReference type="ProteomicsDB" id="80991">
    <molecule id="Q9H6J7-2"/>
</dbReference>
<dbReference type="ProteomicsDB" id="80992">
    <molecule id="Q9H6J7-3"/>
</dbReference>
<dbReference type="Pumba" id="Q9H6J7"/>
<dbReference type="Antibodypedia" id="42909">
    <property type="antibodies" value="41 antibodies from 16 providers"/>
</dbReference>
<dbReference type="DNASU" id="79096"/>
<dbReference type="Ensembl" id="ENST00000278460.12">
    <molecule id="Q9H6J7-1"/>
    <property type="protein sequence ID" value="ENSP00000278460.8"/>
    <property type="gene ID" value="ENSG00000149179.14"/>
</dbReference>
<dbReference type="Ensembl" id="ENST00000378615.7">
    <molecule id="Q9H6J7-2"/>
    <property type="protein sequence ID" value="ENSP00000367878.3"/>
    <property type="gene ID" value="ENSG00000149179.14"/>
</dbReference>
<dbReference type="Ensembl" id="ENST00000378618.6">
    <molecule id="Q9H6J7-4"/>
    <property type="protein sequence ID" value="ENSP00000367881.2"/>
    <property type="gene ID" value="ENSG00000149179.14"/>
</dbReference>
<dbReference type="Ensembl" id="ENST00000395460.6">
    <molecule id="Q9H6J7-3"/>
    <property type="protein sequence ID" value="ENSP00000378844.2"/>
    <property type="gene ID" value="ENSG00000149179.14"/>
</dbReference>
<dbReference type="GeneID" id="79096"/>
<dbReference type="KEGG" id="hsa:79096"/>
<dbReference type="MANE-Select" id="ENST00000278460.12">
    <property type="protein sequence ID" value="ENSP00000278460.8"/>
    <property type="RefSeq nucleotide sequence ID" value="NM_024113.5"/>
    <property type="RefSeq protein sequence ID" value="NP_077018.1"/>
</dbReference>
<dbReference type="UCSC" id="uc001ndp.5">
    <molecule id="Q9H6J7-1"/>
    <property type="organism name" value="human"/>
</dbReference>
<dbReference type="AGR" id="HGNC:28720"/>
<dbReference type="CTD" id="79096"/>
<dbReference type="DisGeNET" id="79096"/>
<dbReference type="GeneCards" id="CSTPP1"/>
<dbReference type="HGNC" id="HGNC:28720">
    <property type="gene designation" value="CSTPP1"/>
</dbReference>
<dbReference type="HPA" id="ENSG00000149179">
    <property type="expression patterns" value="Low tissue specificity"/>
</dbReference>
<dbReference type="MIM" id="620479">
    <property type="type" value="gene"/>
</dbReference>
<dbReference type="neXtProt" id="NX_Q9H6J7"/>
<dbReference type="OpenTargets" id="ENSG00000149179"/>
<dbReference type="VEuPathDB" id="HostDB:ENSG00000149179"/>
<dbReference type="eggNOG" id="ENOG502QRVN">
    <property type="taxonomic scope" value="Eukaryota"/>
</dbReference>
<dbReference type="GeneTree" id="ENSGT00390000012935"/>
<dbReference type="HOGENOM" id="CLU_064579_0_0_1"/>
<dbReference type="InParanoid" id="Q9H6J7"/>
<dbReference type="OMA" id="KATPHNR"/>
<dbReference type="OrthoDB" id="13226at9604"/>
<dbReference type="PAN-GO" id="Q9H6J7">
    <property type="GO annotations" value="0 GO annotations based on evolutionary models"/>
</dbReference>
<dbReference type="PhylomeDB" id="Q9H6J7"/>
<dbReference type="TreeFam" id="TF329168"/>
<dbReference type="PathwayCommons" id="Q9H6J7"/>
<dbReference type="SignaLink" id="Q9H6J7"/>
<dbReference type="BioGRID-ORCS" id="79096">
    <property type="hits" value="10 hits in 1131 CRISPR screens"/>
</dbReference>
<dbReference type="ChiTaRS" id="C11orf49">
    <property type="organism name" value="human"/>
</dbReference>
<dbReference type="GeneWiki" id="C11orf49"/>
<dbReference type="GenomeRNAi" id="79096"/>
<dbReference type="Pharos" id="Q9H6J7">
    <property type="development level" value="Tdark"/>
</dbReference>
<dbReference type="PRO" id="PR:Q9H6J7"/>
<dbReference type="Proteomes" id="UP000005640">
    <property type="component" value="Chromosome 11"/>
</dbReference>
<dbReference type="RNAct" id="Q9H6J7">
    <property type="molecule type" value="protein"/>
</dbReference>
<dbReference type="Bgee" id="ENSG00000149179">
    <property type="expression patterns" value="Expressed in lateral nuclear group of thalamus and 186 other cell types or tissues"/>
</dbReference>
<dbReference type="ExpressionAtlas" id="Q9H6J7">
    <property type="expression patterns" value="baseline and differential"/>
</dbReference>
<dbReference type="GO" id="GO:0034451">
    <property type="term" value="C:centriolar satellite"/>
    <property type="evidence" value="ECO:0000314"/>
    <property type="project" value="UniProtKB"/>
</dbReference>
<dbReference type="GO" id="GO:0005737">
    <property type="term" value="C:cytoplasm"/>
    <property type="evidence" value="ECO:0007669"/>
    <property type="project" value="UniProtKB-KW"/>
</dbReference>
<dbReference type="GO" id="GO:0005874">
    <property type="term" value="C:microtubule"/>
    <property type="evidence" value="ECO:0007669"/>
    <property type="project" value="UniProtKB-KW"/>
</dbReference>
<dbReference type="GO" id="GO:0030674">
    <property type="term" value="F:protein-macromolecule adaptor activity"/>
    <property type="evidence" value="ECO:0000314"/>
    <property type="project" value="UniProt"/>
</dbReference>
<dbReference type="GO" id="GO:0061635">
    <property type="term" value="P:regulation of protein complex stability"/>
    <property type="evidence" value="ECO:0000314"/>
    <property type="project" value="UniProt"/>
</dbReference>
<dbReference type="CDD" id="cd22959">
    <property type="entry name" value="DD_C11orf49"/>
    <property type="match status" value="1"/>
</dbReference>
<dbReference type="InterPro" id="IPR038968">
    <property type="entry name" value="CSTPP1"/>
</dbReference>
<dbReference type="PANTHER" id="PTHR34252:SF1">
    <property type="entry name" value="CENTRIOLAR SATELLITE-ASSOCIATED TUBULIN POLYGLUTAMYLASE COMPLEX REGULATOR 1"/>
    <property type="match status" value="1"/>
</dbReference>
<dbReference type="PANTHER" id="PTHR34252">
    <property type="entry name" value="UPF0705 PROTEIN C11ORF49"/>
    <property type="match status" value="1"/>
</dbReference>
<protein>
    <recommendedName>
        <fullName evidence="7">Centriolar satellite-associated tubulin polyglutamylase complex regulator 1</fullName>
    </recommendedName>
</protein>
<reference key="1">
    <citation type="journal article" date="2004" name="Nat. Genet.">
        <title>Complete sequencing and characterization of 21,243 full-length human cDNAs.</title>
        <authorList>
            <person name="Ota T."/>
            <person name="Suzuki Y."/>
            <person name="Nishikawa T."/>
            <person name="Otsuki T."/>
            <person name="Sugiyama T."/>
            <person name="Irie R."/>
            <person name="Wakamatsu A."/>
            <person name="Hayashi K."/>
            <person name="Sato H."/>
            <person name="Nagai K."/>
            <person name="Kimura K."/>
            <person name="Makita H."/>
            <person name="Sekine M."/>
            <person name="Obayashi M."/>
            <person name="Nishi T."/>
            <person name="Shibahara T."/>
            <person name="Tanaka T."/>
            <person name="Ishii S."/>
            <person name="Yamamoto J."/>
            <person name="Saito K."/>
            <person name="Kawai Y."/>
            <person name="Isono Y."/>
            <person name="Nakamura Y."/>
            <person name="Nagahari K."/>
            <person name="Murakami K."/>
            <person name="Yasuda T."/>
            <person name="Iwayanagi T."/>
            <person name="Wagatsuma M."/>
            <person name="Shiratori A."/>
            <person name="Sudo H."/>
            <person name="Hosoiri T."/>
            <person name="Kaku Y."/>
            <person name="Kodaira H."/>
            <person name="Kondo H."/>
            <person name="Sugawara M."/>
            <person name="Takahashi M."/>
            <person name="Kanda K."/>
            <person name="Yokoi T."/>
            <person name="Furuya T."/>
            <person name="Kikkawa E."/>
            <person name="Omura Y."/>
            <person name="Abe K."/>
            <person name="Kamihara K."/>
            <person name="Katsuta N."/>
            <person name="Sato K."/>
            <person name="Tanikawa M."/>
            <person name="Yamazaki M."/>
            <person name="Ninomiya K."/>
            <person name="Ishibashi T."/>
            <person name="Yamashita H."/>
            <person name="Murakawa K."/>
            <person name="Fujimori K."/>
            <person name="Tanai H."/>
            <person name="Kimata M."/>
            <person name="Watanabe M."/>
            <person name="Hiraoka S."/>
            <person name="Chiba Y."/>
            <person name="Ishida S."/>
            <person name="Ono Y."/>
            <person name="Takiguchi S."/>
            <person name="Watanabe S."/>
            <person name="Yosida M."/>
            <person name="Hotuta T."/>
            <person name="Kusano J."/>
            <person name="Kanehori K."/>
            <person name="Takahashi-Fujii A."/>
            <person name="Hara H."/>
            <person name="Tanase T.-O."/>
            <person name="Nomura Y."/>
            <person name="Togiya S."/>
            <person name="Komai F."/>
            <person name="Hara R."/>
            <person name="Takeuchi K."/>
            <person name="Arita M."/>
            <person name="Imose N."/>
            <person name="Musashino K."/>
            <person name="Yuuki H."/>
            <person name="Oshima A."/>
            <person name="Sasaki N."/>
            <person name="Aotsuka S."/>
            <person name="Yoshikawa Y."/>
            <person name="Matsunawa H."/>
            <person name="Ichihara T."/>
            <person name="Shiohata N."/>
            <person name="Sano S."/>
            <person name="Moriya S."/>
            <person name="Momiyama H."/>
            <person name="Satoh N."/>
            <person name="Takami S."/>
            <person name="Terashima Y."/>
            <person name="Suzuki O."/>
            <person name="Nakagawa S."/>
            <person name="Senoh A."/>
            <person name="Mizoguchi H."/>
            <person name="Goto Y."/>
            <person name="Shimizu F."/>
            <person name="Wakebe H."/>
            <person name="Hishigaki H."/>
            <person name="Watanabe T."/>
            <person name="Sugiyama A."/>
            <person name="Takemoto M."/>
            <person name="Kawakami B."/>
            <person name="Yamazaki M."/>
            <person name="Watanabe K."/>
            <person name="Kumagai A."/>
            <person name="Itakura S."/>
            <person name="Fukuzumi Y."/>
            <person name="Fujimori Y."/>
            <person name="Komiyama M."/>
            <person name="Tashiro H."/>
            <person name="Tanigami A."/>
            <person name="Fujiwara T."/>
            <person name="Ono T."/>
            <person name="Yamada K."/>
            <person name="Fujii Y."/>
            <person name="Ozaki K."/>
            <person name="Hirao M."/>
            <person name="Ohmori Y."/>
            <person name="Kawabata A."/>
            <person name="Hikiji T."/>
            <person name="Kobatake N."/>
            <person name="Inagaki H."/>
            <person name="Ikema Y."/>
            <person name="Okamoto S."/>
            <person name="Okitani R."/>
            <person name="Kawakami T."/>
            <person name="Noguchi S."/>
            <person name="Itoh T."/>
            <person name="Shigeta K."/>
            <person name="Senba T."/>
            <person name="Matsumura K."/>
            <person name="Nakajima Y."/>
            <person name="Mizuno T."/>
            <person name="Morinaga M."/>
            <person name="Sasaki M."/>
            <person name="Togashi T."/>
            <person name="Oyama M."/>
            <person name="Hata H."/>
            <person name="Watanabe M."/>
            <person name="Komatsu T."/>
            <person name="Mizushima-Sugano J."/>
            <person name="Satoh T."/>
            <person name="Shirai Y."/>
            <person name="Takahashi Y."/>
            <person name="Nakagawa K."/>
            <person name="Okumura K."/>
            <person name="Nagase T."/>
            <person name="Nomura N."/>
            <person name="Kikuchi H."/>
            <person name="Masuho Y."/>
            <person name="Yamashita R."/>
            <person name="Nakai K."/>
            <person name="Yada T."/>
            <person name="Nakamura Y."/>
            <person name="Ohara O."/>
            <person name="Isogai T."/>
            <person name="Sugano S."/>
        </authorList>
    </citation>
    <scope>NUCLEOTIDE SEQUENCE [LARGE SCALE MRNA] (ISOFORM 1)</scope>
</reference>
<reference key="2">
    <citation type="journal article" date="2001" name="Genome Res.">
        <title>Towards a catalog of human genes and proteins: sequencing and analysis of 500 novel complete protein coding human cDNAs.</title>
        <authorList>
            <person name="Wiemann S."/>
            <person name="Weil B."/>
            <person name="Wellenreuther R."/>
            <person name="Gassenhuber J."/>
            <person name="Glassl S."/>
            <person name="Ansorge W."/>
            <person name="Boecher M."/>
            <person name="Bloecker H."/>
            <person name="Bauersachs S."/>
            <person name="Blum H."/>
            <person name="Lauber J."/>
            <person name="Duesterhoeft A."/>
            <person name="Beyer A."/>
            <person name="Koehrer K."/>
            <person name="Strack N."/>
            <person name="Mewes H.-W."/>
            <person name="Ottenwaelder B."/>
            <person name="Obermaier B."/>
            <person name="Tampe J."/>
            <person name="Heubner D."/>
            <person name="Wambutt R."/>
            <person name="Korn B."/>
            <person name="Klein M."/>
            <person name="Poustka A."/>
        </authorList>
    </citation>
    <scope>NUCLEOTIDE SEQUENCE [LARGE SCALE MRNA] (ISOFORM 1)</scope>
    <source>
        <tissue>Amygdala</tissue>
    </source>
</reference>
<reference key="3">
    <citation type="submission" date="2004-06" db="EMBL/GenBank/DDBJ databases">
        <title>Cloning of human full open reading frames in Gateway(TM) system entry vector (pDONR201).</title>
        <authorList>
            <person name="Ebert L."/>
            <person name="Schick M."/>
            <person name="Neubert P."/>
            <person name="Schatten R."/>
            <person name="Henze S."/>
            <person name="Korn B."/>
        </authorList>
    </citation>
    <scope>NUCLEOTIDE SEQUENCE [LARGE SCALE MRNA] (ISOFORM 2)</scope>
</reference>
<reference key="4">
    <citation type="journal article" date="2006" name="Nature">
        <title>Human chromosome 11 DNA sequence and analysis including novel gene identification.</title>
        <authorList>
            <person name="Taylor T.D."/>
            <person name="Noguchi H."/>
            <person name="Totoki Y."/>
            <person name="Toyoda A."/>
            <person name="Kuroki Y."/>
            <person name="Dewar K."/>
            <person name="Lloyd C."/>
            <person name="Itoh T."/>
            <person name="Takeda T."/>
            <person name="Kim D.-W."/>
            <person name="She X."/>
            <person name="Barlow K.F."/>
            <person name="Bloom T."/>
            <person name="Bruford E."/>
            <person name="Chang J.L."/>
            <person name="Cuomo C.A."/>
            <person name="Eichler E."/>
            <person name="FitzGerald M.G."/>
            <person name="Jaffe D.B."/>
            <person name="LaButti K."/>
            <person name="Nicol R."/>
            <person name="Park H.-S."/>
            <person name="Seaman C."/>
            <person name="Sougnez C."/>
            <person name="Yang X."/>
            <person name="Zimmer A.R."/>
            <person name="Zody M.C."/>
            <person name="Birren B.W."/>
            <person name="Nusbaum C."/>
            <person name="Fujiyama A."/>
            <person name="Hattori M."/>
            <person name="Rogers J."/>
            <person name="Lander E.S."/>
            <person name="Sakaki Y."/>
        </authorList>
    </citation>
    <scope>NUCLEOTIDE SEQUENCE [LARGE SCALE GENOMIC DNA]</scope>
</reference>
<reference key="5">
    <citation type="submission" date="2005-09" db="EMBL/GenBank/DDBJ databases">
        <authorList>
            <person name="Mural R.J."/>
            <person name="Istrail S."/>
            <person name="Sutton G.G."/>
            <person name="Florea L."/>
            <person name="Halpern A.L."/>
            <person name="Mobarry C.M."/>
            <person name="Lippert R."/>
            <person name="Walenz B."/>
            <person name="Shatkay H."/>
            <person name="Dew I."/>
            <person name="Miller J.R."/>
            <person name="Flanigan M.J."/>
            <person name="Edwards N.J."/>
            <person name="Bolanos R."/>
            <person name="Fasulo D."/>
            <person name="Halldorsson B.V."/>
            <person name="Hannenhalli S."/>
            <person name="Turner R."/>
            <person name="Yooseph S."/>
            <person name="Lu F."/>
            <person name="Nusskern D.R."/>
            <person name="Shue B.C."/>
            <person name="Zheng X.H."/>
            <person name="Zhong F."/>
            <person name="Delcher A.L."/>
            <person name="Huson D.H."/>
            <person name="Kravitz S.A."/>
            <person name="Mouchard L."/>
            <person name="Reinert K."/>
            <person name="Remington K.A."/>
            <person name="Clark A.G."/>
            <person name="Waterman M.S."/>
            <person name="Eichler E.E."/>
            <person name="Adams M.D."/>
            <person name="Hunkapiller M.W."/>
            <person name="Myers E.W."/>
            <person name="Venter J.C."/>
        </authorList>
    </citation>
    <scope>NUCLEOTIDE SEQUENCE [LARGE SCALE GENOMIC DNA]</scope>
</reference>
<reference key="6">
    <citation type="journal article" date="2004" name="Genome Res.">
        <title>The status, quality, and expansion of the NIH full-length cDNA project: the Mammalian Gene Collection (MGC).</title>
        <authorList>
            <consortium name="The MGC Project Team"/>
        </authorList>
    </citation>
    <scope>NUCLEOTIDE SEQUENCE [LARGE SCALE MRNA] (ISOFORMS 2 AND 3)</scope>
    <source>
        <tissue>Blood</tissue>
        <tissue>Colon</tissue>
        <tissue>Lung</tissue>
    </source>
</reference>
<reference key="7">
    <citation type="journal article" date="1996" name="Genome Res.">
        <title>Normalization and subtraction: two approaches to facilitate gene discovery.</title>
        <authorList>
            <person name="Bonaldo M.F."/>
            <person name="Lennon G."/>
            <person name="Soares M.B."/>
        </authorList>
    </citation>
    <scope>NUCLEOTIDE SEQUENCE [LARGE SCALE MRNA] OF 242-326 (ISOFORM 4)</scope>
    <source>
        <tissue>Optic nerve</tissue>
    </source>
</reference>
<reference key="8">
    <citation type="journal article" date="2022" name="Cell Res.">
        <title>Regulators of tubulin polyglutamylation control nuclear shape and cilium disassembly by balancing microtubule and actin assembly.</title>
        <authorList>
            <person name="Wang L."/>
            <person name="Paudyal S.C."/>
            <person name="Kang Y."/>
            <person name="Owa M."/>
            <person name="Liang F.X."/>
            <person name="Spektor A."/>
            <person name="Knaut H."/>
            <person name="Sanchez I."/>
            <person name="Dynlacht B.D."/>
        </authorList>
    </citation>
    <scope>FUNCTION</scope>
    <scope>INTERACTION WITH PCM1; TTLL1; TPGS1; TPGS2 AND LRRC49</scope>
    <scope>SUBCELLULAR LOCATION</scope>
    <scope>MICROTUBULE-BINDING</scope>
</reference>
<accession>Q9H6J7</accession>
<accession>D3DQQ8</accession>
<accession>E9PAX7</accession>
<accession>Q7L077</accession>
<accession>Q96CS8</accession>
<accession>Q9BQH4</accession>
<accession>Q9BUW5</accession>
<organism>
    <name type="scientific">Homo sapiens</name>
    <name type="common">Human</name>
    <dbReference type="NCBI Taxonomy" id="9606"/>
    <lineage>
        <taxon>Eukaryota</taxon>
        <taxon>Metazoa</taxon>
        <taxon>Chordata</taxon>
        <taxon>Craniata</taxon>
        <taxon>Vertebrata</taxon>
        <taxon>Euteleostomi</taxon>
        <taxon>Mammalia</taxon>
        <taxon>Eutheria</taxon>
        <taxon>Euarchontoglires</taxon>
        <taxon>Primates</taxon>
        <taxon>Haplorrhini</taxon>
        <taxon>Catarrhini</taxon>
        <taxon>Hominidae</taxon>
        <taxon>Homo</taxon>
    </lineage>
</organism>
<keyword id="KW-0025">Alternative splicing</keyword>
<keyword id="KW-0963">Cytoplasm</keyword>
<keyword id="KW-0206">Cytoskeleton</keyword>
<keyword id="KW-0493">Microtubule</keyword>
<keyword id="KW-0597">Phosphoprotein</keyword>
<keyword id="KW-1267">Proteomics identification</keyword>
<keyword id="KW-1185">Reference proteome</keyword>
<sequence length="331" mass="37353">MLSPERLALPDYEYLAQRHVLTYMEDAVCQLLENREDISQYGIARFFTEYFNSVCQGTHILFREFSFVQATPHNRVSFLRAFWRCFRTVGKNGDLLTMKEYHCLLQLLCPDFPLELTQKAARIVLMDDAMDCLMSFSDFLFAFQIQFYYSEFLDSVAAIYEDLLSGKNPNTVIVPTSSSGQHRQRPALGGAGTLEGVEASLFYQCLENLCDRHKYSCPPPALVKEALSNVQRLTFYGFLMALSKHRGINQALGALPDKGDLMHDPAMDEELERLLAQVPGLVNSVTASPEASCLPSRTPPRVGSPWRPLHHSRKVDGESDGSTEETDESET</sequence>
<feature type="chain" id="PRO_0000281425" description="Centriolar satellite-associated tubulin polyglutamylase complex regulator 1">
    <location>
        <begin position="1"/>
        <end position="331"/>
    </location>
</feature>
<feature type="region of interest" description="Required for interaction with TPGS1, LRRC49, and TTLL1" evidence="3">
    <location>
        <begin position="1"/>
        <end position="225"/>
    </location>
</feature>
<feature type="region of interest" description="Required for interaction with PCM1" evidence="3">
    <location>
        <begin position="1"/>
        <end position="111"/>
    </location>
</feature>
<feature type="region of interest" description="Required for interaction with TPGS2" evidence="3">
    <location>
        <begin position="112"/>
        <end position="331"/>
    </location>
</feature>
<feature type="region of interest" description="Disordered" evidence="2">
    <location>
        <begin position="288"/>
        <end position="331"/>
    </location>
</feature>
<feature type="compositionally biased region" description="Acidic residues" evidence="2">
    <location>
        <begin position="318"/>
        <end position="331"/>
    </location>
</feature>
<feature type="modified residue" description="Phosphoserine" evidence="1">
    <location>
        <position position="319"/>
    </location>
</feature>
<feature type="splice variant" id="VSP_024000" description="In isoform 2." evidence="4 6">
    <original>L</original>
    <variation>LLLPFFR</variation>
    <location>
        <position position="274"/>
    </location>
</feature>
<feature type="splice variant" id="VSP_024001" description="In isoform 3." evidence="4">
    <location>
        <begin position="275"/>
        <end position="331"/>
    </location>
</feature>
<feature type="splice variant" id="VSP_044902" description="In isoform 4." evidence="5">
    <original>LAQVPGLVNSVTASPEASCLPSRTPPRVGSPWRPLHHSRKVDGESDGSTEETDESET</original>
    <variation>VVRSKLHRTSRQHRAKEPGAFGFQRREKQEALERVSSASVPTPYHYRWEPRE</variation>
    <location>
        <begin position="275"/>
        <end position="331"/>
    </location>
</feature>
<feature type="sequence conflict" description="In Ref. 1; BAB15262." evidence="7" ref="1">
    <original>T</original>
    <variation>A</variation>
    <location>
        <position position="88"/>
    </location>
</feature>
<gene>
    <name evidence="8" type="primary">CSTPP1</name>
    <name type="synonym">C11orf49</name>
</gene>
<comment type="function">
    <text evidence="3">Regulator of the tubulin polyglutamylase complex (TPGC) that controls cytoskeletal organization, nuclear shape, and cilium disassembly by balancing microtubule and actin assembly (PubMed:34782749). Regulates the assembly and stability of the TPGC and thereby modulates polyglutamylation of the microtubule, which antagonizes MAP4 binding (PubMed:34782749).</text>
</comment>
<comment type="subunit">
    <text evidence="3">Interacts with PCM1 (PubMed:34782749). Interacts with TTLL1, TPGS1, TPGS2 and LRRC49; the interactions link CSTPP1 to the complex TPGC (PubMed:34782749). Binds to alpha-tubulin (PubMed:34782749).</text>
</comment>
<comment type="interaction">
    <interactant intactId="EBI-721300">
        <id>Q9H6J7</id>
    </interactant>
    <interactant intactId="EBI-10171633">
        <id>Q96PV4</id>
        <label>PNMA5</label>
    </interactant>
    <organismsDiffer>false</organismsDiffer>
    <experiments>3</experiments>
</comment>
<comment type="interaction">
    <interactant intactId="EBI-721300">
        <id>Q9H6J7</id>
    </interactant>
    <interactant intactId="EBI-721615">
        <id>Q9H0T7</id>
        <label>RAB17</label>
    </interactant>
    <organismsDiffer>false</organismsDiffer>
    <experiments>3</experiments>
</comment>
<comment type="interaction">
    <interactant intactId="EBI-721300">
        <id>Q9H6J7</id>
    </interactant>
    <interactant intactId="EBI-10249635">
        <id>Q6FGU7</id>
        <label>RAB7L1</label>
    </interactant>
    <organismsDiffer>false</organismsDiffer>
    <experiments>3</experiments>
</comment>
<comment type="interaction">
    <interactant intactId="EBI-13328871">
        <id>Q9H6J7-2</id>
    </interactant>
    <interactant intactId="EBI-1222467">
        <id>P02649</id>
        <label>APOE</label>
    </interactant>
    <organismsDiffer>false</organismsDiffer>
    <experiments>3</experiments>
</comment>
<comment type="interaction">
    <interactant intactId="EBI-13328871">
        <id>Q9H6J7-2</id>
    </interactant>
    <interactant intactId="EBI-719226">
        <id>Q9NPA8</id>
        <label>ENY2</label>
    </interactant>
    <organismsDiffer>false</organismsDiffer>
    <experiments>3</experiments>
</comment>
<comment type="interaction">
    <interactant intactId="EBI-13328871">
        <id>Q9H6J7-2</id>
    </interactant>
    <interactant intactId="EBI-1050358">
        <id>P07954</id>
        <label>FH</label>
    </interactant>
    <organismsDiffer>false</organismsDiffer>
    <experiments>3</experiments>
</comment>
<comment type="interaction">
    <interactant intactId="EBI-13328871">
        <id>Q9H6J7-2</id>
    </interactant>
    <interactant intactId="EBI-947242">
        <id>P28676</id>
        <label>GCA</label>
    </interactant>
    <organismsDiffer>false</organismsDiffer>
    <experiments>3</experiments>
</comment>
<comment type="interaction">
    <interactant intactId="EBI-13328871">
        <id>Q9H6J7-2</id>
    </interactant>
    <interactant intactId="EBI-466029">
        <id>P42858</id>
        <label>HTT</label>
    </interactant>
    <organismsDiffer>false</organismsDiffer>
    <experiments>6</experiments>
</comment>
<comment type="interaction">
    <interactant intactId="EBI-13328871">
        <id>Q9H6J7-2</id>
    </interactant>
    <interactant intactId="EBI-716486">
        <id>Q92597</id>
        <label>NDRG1</label>
    </interactant>
    <organismsDiffer>false</organismsDiffer>
    <experiments>3</experiments>
</comment>
<comment type="interaction">
    <interactant intactId="EBI-13328871">
        <id>Q9H6J7-2</id>
    </interactant>
    <interactant intactId="EBI-530034">
        <id>O43189</id>
        <label>PHF1</label>
    </interactant>
    <organismsDiffer>false</organismsDiffer>
    <experiments>3</experiments>
</comment>
<comment type="interaction">
    <interactant intactId="EBI-13328871">
        <id>Q9H6J7-2</id>
    </interactant>
    <interactant intactId="EBI-10171633">
        <id>Q96PV4</id>
        <label>PNMA5</label>
    </interactant>
    <organismsDiffer>false</organismsDiffer>
    <experiments>3</experiments>
</comment>
<comment type="interaction">
    <interactant intactId="EBI-13328871">
        <id>Q9H6J7-2</id>
    </interactant>
    <interactant intactId="EBI-476431">
        <id>P10644</id>
        <label>PRKAR1A</label>
    </interactant>
    <organismsDiffer>false</organismsDiffer>
    <experiments>3</experiments>
</comment>
<comment type="interaction">
    <interactant intactId="EBI-13328871">
        <id>Q9H6J7-2</id>
    </interactant>
    <interactant intactId="EBI-2932492">
        <id>Q99757</id>
        <label>TXN2</label>
    </interactant>
    <organismsDiffer>false</organismsDiffer>
    <experiments>3</experiments>
</comment>
<comment type="interaction">
    <interactant intactId="EBI-13328871">
        <id>Q9H6J7-2</id>
    </interactant>
    <interactant intactId="EBI-10237226">
        <id>Q15911-2</id>
        <label>ZFHX3</label>
    </interactant>
    <organismsDiffer>false</organismsDiffer>
    <experiments>3</experiments>
</comment>
<comment type="subcellular location">
    <subcellularLocation>
        <location evidence="3">Cytoplasm</location>
        <location evidence="3">Cytoskeleton</location>
        <location evidence="3">Microtubule organizing center</location>
        <location evidence="3">Centrosome</location>
        <location evidence="3">Centriolar satellite</location>
    </subcellularLocation>
    <subcellularLocation>
        <location evidence="3">Cytoplasm</location>
        <location evidence="3">Cytoskeleton</location>
    </subcellularLocation>
    <text evidence="3">Associated with microtubules.</text>
</comment>
<comment type="alternative products">
    <event type="alternative splicing"/>
    <isoform>
        <id>Q9H6J7-1</id>
        <name>1</name>
        <sequence type="displayed"/>
    </isoform>
    <isoform>
        <id>Q9H6J7-2</id>
        <name>2</name>
        <sequence type="described" ref="VSP_024000"/>
    </isoform>
    <isoform>
        <id>Q9H6J7-3</id>
        <name>3</name>
        <sequence type="described" ref="VSP_024001"/>
    </isoform>
    <isoform>
        <id>Q9H6J7-4</id>
        <name>4</name>
        <sequence type="described" ref="VSP_044902"/>
    </isoform>
</comment>
<comment type="similarity">
    <text evidence="7">Belongs to the CSTPP1 family.</text>
</comment>
<evidence type="ECO:0000250" key="1">
    <source>
        <dbReference type="UniProtKB" id="Q8BHR8"/>
    </source>
</evidence>
<evidence type="ECO:0000256" key="2">
    <source>
        <dbReference type="SAM" id="MobiDB-lite"/>
    </source>
</evidence>
<evidence type="ECO:0000269" key="3">
    <source>
    </source>
</evidence>
<evidence type="ECO:0000303" key="4">
    <source>
    </source>
</evidence>
<evidence type="ECO:0000303" key="5">
    <source>
    </source>
</evidence>
<evidence type="ECO:0000303" key="6">
    <source ref="3"/>
</evidence>
<evidence type="ECO:0000305" key="7"/>
<evidence type="ECO:0000312" key="8">
    <source>
        <dbReference type="HGNC" id="HGNC:28720"/>
    </source>
</evidence>
<proteinExistence type="evidence at protein level"/>
<name>CSTP1_HUMAN</name>